<sequence length="421" mass="48196">MSKLTIVRGFNDVLPLDSYKWQFLESKVKLILDRYNYSETRLPIVERSELFHRSVGESSDIVSKETYDFQDRNGDSLTLRPEGTAGCVRMVIENNLATRGQTQKLWYCGPMFRYERPQKGRYRQFYQLGVEAYGFDGIAIDLEVIAIAWSLFKELGISEYVTLELNSLGSSLNRQEYTQALLQYLKPYHAELDEDSIKRLDKNPLRILDSKIEKTQKILANAPKLIDFIDHDLRLRFKQTCQYLDALGVRYKLNENLVRGLDYYTGLVFEWTTDKLGSQSAICAGGRYDGLVENLGGQKIAAIGFAIGMERLLLLLEDLGKLPNQDNACDVFFILDSAQLHQSLAIVENIRQELPQLKIDMDLKFGSFKSQFKKADKSGAKVAIIIGQDELDNGFAGIKFLQQNEEQQQVAFNELINFLER</sequence>
<evidence type="ECO:0000255" key="1">
    <source>
        <dbReference type="HAMAP-Rule" id="MF_00127"/>
    </source>
</evidence>
<accession>Q0BK72</accession>
<reference key="1">
    <citation type="journal article" date="2006" name="J. Bacteriol.">
        <title>Chromosome rearrangement and diversification of Francisella tularensis revealed by the type B (OSU18) genome sequence.</title>
        <authorList>
            <person name="Petrosino J.F."/>
            <person name="Xiang Q."/>
            <person name="Karpathy S.E."/>
            <person name="Jiang H."/>
            <person name="Yerrapragada S."/>
            <person name="Liu Y."/>
            <person name="Gioia J."/>
            <person name="Hemphill L."/>
            <person name="Gonzalez A."/>
            <person name="Raghavan T.M."/>
            <person name="Uzman A."/>
            <person name="Fox G.E."/>
            <person name="Highlander S."/>
            <person name="Reichard M."/>
            <person name="Morton R.J."/>
            <person name="Clinkenbeard K.D."/>
            <person name="Weinstock G.M."/>
        </authorList>
    </citation>
    <scope>NUCLEOTIDE SEQUENCE [LARGE SCALE GENOMIC DNA]</scope>
    <source>
        <strain>OSU18</strain>
    </source>
</reference>
<name>SYH_FRATO</name>
<keyword id="KW-0030">Aminoacyl-tRNA synthetase</keyword>
<keyword id="KW-0067">ATP-binding</keyword>
<keyword id="KW-0963">Cytoplasm</keyword>
<keyword id="KW-0436">Ligase</keyword>
<keyword id="KW-0547">Nucleotide-binding</keyword>
<keyword id="KW-0648">Protein biosynthesis</keyword>
<comment type="catalytic activity">
    <reaction evidence="1">
        <text>tRNA(His) + L-histidine + ATP = L-histidyl-tRNA(His) + AMP + diphosphate + H(+)</text>
        <dbReference type="Rhea" id="RHEA:17313"/>
        <dbReference type="Rhea" id="RHEA-COMP:9665"/>
        <dbReference type="Rhea" id="RHEA-COMP:9689"/>
        <dbReference type="ChEBI" id="CHEBI:15378"/>
        <dbReference type="ChEBI" id="CHEBI:30616"/>
        <dbReference type="ChEBI" id="CHEBI:33019"/>
        <dbReference type="ChEBI" id="CHEBI:57595"/>
        <dbReference type="ChEBI" id="CHEBI:78442"/>
        <dbReference type="ChEBI" id="CHEBI:78527"/>
        <dbReference type="ChEBI" id="CHEBI:456215"/>
        <dbReference type="EC" id="6.1.1.21"/>
    </reaction>
</comment>
<comment type="subunit">
    <text evidence="1">Homodimer.</text>
</comment>
<comment type="subcellular location">
    <subcellularLocation>
        <location evidence="1">Cytoplasm</location>
    </subcellularLocation>
</comment>
<comment type="similarity">
    <text evidence="1">Belongs to the class-II aminoacyl-tRNA synthetase family.</text>
</comment>
<dbReference type="EC" id="6.1.1.21" evidence="1"/>
<dbReference type="EMBL" id="CP000437">
    <property type="protein sequence ID" value="ABI83512.1"/>
    <property type="molecule type" value="Genomic_DNA"/>
</dbReference>
<dbReference type="RefSeq" id="WP_011648785.1">
    <property type="nucleotide sequence ID" value="NC_017463.1"/>
</dbReference>
<dbReference type="SMR" id="Q0BK72"/>
<dbReference type="KEGG" id="fth:FTH_1744"/>
<dbReference type="GO" id="GO:0005737">
    <property type="term" value="C:cytoplasm"/>
    <property type="evidence" value="ECO:0007669"/>
    <property type="project" value="UniProtKB-SubCell"/>
</dbReference>
<dbReference type="GO" id="GO:0005524">
    <property type="term" value="F:ATP binding"/>
    <property type="evidence" value="ECO:0007669"/>
    <property type="project" value="UniProtKB-UniRule"/>
</dbReference>
<dbReference type="GO" id="GO:0004821">
    <property type="term" value="F:histidine-tRNA ligase activity"/>
    <property type="evidence" value="ECO:0007669"/>
    <property type="project" value="UniProtKB-UniRule"/>
</dbReference>
<dbReference type="GO" id="GO:0006427">
    <property type="term" value="P:histidyl-tRNA aminoacylation"/>
    <property type="evidence" value="ECO:0007669"/>
    <property type="project" value="UniProtKB-UniRule"/>
</dbReference>
<dbReference type="CDD" id="cd00773">
    <property type="entry name" value="HisRS-like_core"/>
    <property type="match status" value="1"/>
</dbReference>
<dbReference type="FunFam" id="3.30.930.10:FF:000005">
    <property type="entry name" value="Histidine--tRNA ligase"/>
    <property type="match status" value="1"/>
</dbReference>
<dbReference type="Gene3D" id="3.40.50.800">
    <property type="entry name" value="Anticodon-binding domain"/>
    <property type="match status" value="1"/>
</dbReference>
<dbReference type="Gene3D" id="3.30.930.10">
    <property type="entry name" value="Bira Bifunctional Protein, Domain 2"/>
    <property type="match status" value="1"/>
</dbReference>
<dbReference type="HAMAP" id="MF_00127">
    <property type="entry name" value="His_tRNA_synth"/>
    <property type="match status" value="1"/>
</dbReference>
<dbReference type="InterPro" id="IPR006195">
    <property type="entry name" value="aa-tRNA-synth_II"/>
</dbReference>
<dbReference type="InterPro" id="IPR045864">
    <property type="entry name" value="aa-tRNA-synth_II/BPL/LPL"/>
</dbReference>
<dbReference type="InterPro" id="IPR004154">
    <property type="entry name" value="Anticodon-bd"/>
</dbReference>
<dbReference type="InterPro" id="IPR036621">
    <property type="entry name" value="Anticodon-bd_dom_sf"/>
</dbReference>
<dbReference type="InterPro" id="IPR015807">
    <property type="entry name" value="His-tRNA-ligase"/>
</dbReference>
<dbReference type="InterPro" id="IPR041715">
    <property type="entry name" value="HisRS-like_core"/>
</dbReference>
<dbReference type="InterPro" id="IPR004516">
    <property type="entry name" value="HisRS/HisZ"/>
</dbReference>
<dbReference type="NCBIfam" id="TIGR00442">
    <property type="entry name" value="hisS"/>
    <property type="match status" value="1"/>
</dbReference>
<dbReference type="PANTHER" id="PTHR43707:SF1">
    <property type="entry name" value="HISTIDINE--TRNA LIGASE, MITOCHONDRIAL-RELATED"/>
    <property type="match status" value="1"/>
</dbReference>
<dbReference type="PANTHER" id="PTHR43707">
    <property type="entry name" value="HISTIDYL-TRNA SYNTHETASE"/>
    <property type="match status" value="1"/>
</dbReference>
<dbReference type="Pfam" id="PF03129">
    <property type="entry name" value="HGTP_anticodon"/>
    <property type="match status" value="1"/>
</dbReference>
<dbReference type="Pfam" id="PF13393">
    <property type="entry name" value="tRNA-synt_His"/>
    <property type="match status" value="1"/>
</dbReference>
<dbReference type="PIRSF" id="PIRSF001549">
    <property type="entry name" value="His-tRNA_synth"/>
    <property type="match status" value="1"/>
</dbReference>
<dbReference type="SUPFAM" id="SSF52954">
    <property type="entry name" value="Class II aaRS ABD-related"/>
    <property type="match status" value="1"/>
</dbReference>
<dbReference type="SUPFAM" id="SSF55681">
    <property type="entry name" value="Class II aaRS and biotin synthetases"/>
    <property type="match status" value="1"/>
</dbReference>
<dbReference type="PROSITE" id="PS50862">
    <property type="entry name" value="AA_TRNA_LIGASE_II"/>
    <property type="match status" value="1"/>
</dbReference>
<organism>
    <name type="scientific">Francisella tularensis subsp. holarctica (strain OSU18)</name>
    <dbReference type="NCBI Taxonomy" id="393011"/>
    <lineage>
        <taxon>Bacteria</taxon>
        <taxon>Pseudomonadati</taxon>
        <taxon>Pseudomonadota</taxon>
        <taxon>Gammaproteobacteria</taxon>
        <taxon>Thiotrichales</taxon>
        <taxon>Francisellaceae</taxon>
        <taxon>Francisella</taxon>
    </lineage>
</organism>
<gene>
    <name evidence="1" type="primary">hisS</name>
    <name type="ordered locus">FTH_1744</name>
</gene>
<proteinExistence type="inferred from homology"/>
<protein>
    <recommendedName>
        <fullName evidence="1">Histidine--tRNA ligase</fullName>
        <ecNumber evidence="1">6.1.1.21</ecNumber>
    </recommendedName>
    <alternativeName>
        <fullName evidence="1">Histidyl-tRNA synthetase</fullName>
        <shortName evidence="1">HisRS</shortName>
    </alternativeName>
</protein>
<feature type="chain" id="PRO_1000016364" description="Histidine--tRNA ligase">
    <location>
        <begin position="1"/>
        <end position="421"/>
    </location>
</feature>